<proteinExistence type="inferred from homology"/>
<gene>
    <name evidence="1" type="primary">ndhJ</name>
    <name type="ordered locus">MAE_11780</name>
</gene>
<organism>
    <name type="scientific">Microcystis aeruginosa (strain NIES-843 / IAM M-2473)</name>
    <dbReference type="NCBI Taxonomy" id="449447"/>
    <lineage>
        <taxon>Bacteria</taxon>
        <taxon>Bacillati</taxon>
        <taxon>Cyanobacteriota</taxon>
        <taxon>Cyanophyceae</taxon>
        <taxon>Oscillatoriophycideae</taxon>
        <taxon>Chroococcales</taxon>
        <taxon>Microcystaceae</taxon>
        <taxon>Microcystis</taxon>
    </lineage>
</organism>
<feature type="chain" id="PRO_0000358129" description="NAD(P)H-quinone oxidoreductase subunit J">
    <location>
        <begin position="1"/>
        <end position="167"/>
    </location>
</feature>
<reference key="1">
    <citation type="journal article" date="2007" name="DNA Res.">
        <title>Complete genomic structure of the bloom-forming toxic cyanobacterium Microcystis aeruginosa NIES-843.</title>
        <authorList>
            <person name="Kaneko T."/>
            <person name="Nakajima N."/>
            <person name="Okamoto S."/>
            <person name="Suzuki I."/>
            <person name="Tanabe Y."/>
            <person name="Tamaoki M."/>
            <person name="Nakamura Y."/>
            <person name="Kasai F."/>
            <person name="Watanabe A."/>
            <person name="Kawashima K."/>
            <person name="Kishida Y."/>
            <person name="Ono A."/>
            <person name="Shimizu Y."/>
            <person name="Takahashi C."/>
            <person name="Minami C."/>
            <person name="Fujishiro T."/>
            <person name="Kohara M."/>
            <person name="Katoh M."/>
            <person name="Nakazaki N."/>
            <person name="Nakayama S."/>
            <person name="Yamada M."/>
            <person name="Tabata S."/>
            <person name="Watanabe M.M."/>
        </authorList>
    </citation>
    <scope>NUCLEOTIDE SEQUENCE [LARGE SCALE GENOMIC DNA]</scope>
    <source>
        <strain>NIES-843 / IAM M-247</strain>
    </source>
</reference>
<protein>
    <recommendedName>
        <fullName evidence="1">NAD(P)H-quinone oxidoreductase subunit J</fullName>
        <ecNumber evidence="1">7.1.1.-</ecNumber>
    </recommendedName>
    <alternativeName>
        <fullName>NAD(P)H dehydrogenase subunit J</fullName>
    </alternativeName>
    <alternativeName>
        <fullName evidence="1">NADH-plastoquinone oxidoreductase subunit J</fullName>
    </alternativeName>
    <alternativeName>
        <fullName evidence="1">NDH-1 subunit J</fullName>
        <shortName evidence="1">NDH-J</shortName>
    </alternativeName>
</protein>
<accession>B0JSV6</accession>
<keyword id="KW-0472">Membrane</keyword>
<keyword id="KW-0520">NAD</keyword>
<keyword id="KW-0521">NADP</keyword>
<keyword id="KW-0618">Plastoquinone</keyword>
<keyword id="KW-0874">Quinone</keyword>
<keyword id="KW-0793">Thylakoid</keyword>
<keyword id="KW-1278">Translocase</keyword>
<keyword id="KW-0813">Transport</keyword>
<sequence>MTEETTAIVQAGPTSIWLSENGFEHQALEADHSGVELIKVEADFLIPLATALYAYGFNYLQCQGAYDLGPGKELVSFYHLVKVTDNVDSPVEVRLKVFLPRDNPRVASVYWIWKAADWQERESYDMFGIIYEGHPHLKRILMPEDWVGWPLRKDYVSPEFYELQDAY</sequence>
<name>NDHJ_MICAN</name>
<comment type="function">
    <text evidence="1">NDH-1 shuttles electrons from an unknown electron donor, via FMN and iron-sulfur (Fe-S) centers, to quinones in the respiratory and/or the photosynthetic chain. The immediate electron acceptor for the enzyme in this species is believed to be plastoquinone. Couples the redox reaction to proton translocation, and thus conserves the redox energy in a proton gradient. Cyanobacterial NDH-1 also plays a role in inorganic carbon-concentration.</text>
</comment>
<comment type="catalytic activity">
    <reaction evidence="1">
        <text>a plastoquinone + NADH + (n+1) H(+)(in) = a plastoquinol + NAD(+) + n H(+)(out)</text>
        <dbReference type="Rhea" id="RHEA:42608"/>
        <dbReference type="Rhea" id="RHEA-COMP:9561"/>
        <dbReference type="Rhea" id="RHEA-COMP:9562"/>
        <dbReference type="ChEBI" id="CHEBI:15378"/>
        <dbReference type="ChEBI" id="CHEBI:17757"/>
        <dbReference type="ChEBI" id="CHEBI:57540"/>
        <dbReference type="ChEBI" id="CHEBI:57945"/>
        <dbReference type="ChEBI" id="CHEBI:62192"/>
    </reaction>
</comment>
<comment type="catalytic activity">
    <reaction evidence="1">
        <text>a plastoquinone + NADPH + (n+1) H(+)(in) = a plastoquinol + NADP(+) + n H(+)(out)</text>
        <dbReference type="Rhea" id="RHEA:42612"/>
        <dbReference type="Rhea" id="RHEA-COMP:9561"/>
        <dbReference type="Rhea" id="RHEA-COMP:9562"/>
        <dbReference type="ChEBI" id="CHEBI:15378"/>
        <dbReference type="ChEBI" id="CHEBI:17757"/>
        <dbReference type="ChEBI" id="CHEBI:57783"/>
        <dbReference type="ChEBI" id="CHEBI:58349"/>
        <dbReference type="ChEBI" id="CHEBI:62192"/>
    </reaction>
</comment>
<comment type="subunit">
    <text evidence="1">NDH-1 can be composed of about 15 different subunits; different subcomplexes with different compositions have been identified which probably have different functions.</text>
</comment>
<comment type="subcellular location">
    <subcellularLocation>
        <location evidence="1">Cellular thylakoid membrane</location>
        <topology evidence="1">Peripheral membrane protein</topology>
        <orientation evidence="1">Cytoplasmic side</orientation>
    </subcellularLocation>
</comment>
<comment type="similarity">
    <text evidence="1">Belongs to the complex I 30 kDa subunit family.</text>
</comment>
<evidence type="ECO:0000255" key="1">
    <source>
        <dbReference type="HAMAP-Rule" id="MF_01357"/>
    </source>
</evidence>
<dbReference type="EC" id="7.1.1.-" evidence="1"/>
<dbReference type="EMBL" id="AP009552">
    <property type="protein sequence ID" value="BAG01000.1"/>
    <property type="molecule type" value="Genomic_DNA"/>
</dbReference>
<dbReference type="RefSeq" id="WP_002780471.1">
    <property type="nucleotide sequence ID" value="NC_010296.1"/>
</dbReference>
<dbReference type="SMR" id="B0JSV6"/>
<dbReference type="STRING" id="449447.MAE_11780"/>
<dbReference type="PaxDb" id="449447-MAE_11780"/>
<dbReference type="EnsemblBacteria" id="BAG01000">
    <property type="protein sequence ID" value="BAG01000"/>
    <property type="gene ID" value="MAE_11780"/>
</dbReference>
<dbReference type="KEGG" id="mar:MAE_11780"/>
<dbReference type="eggNOG" id="COG0852">
    <property type="taxonomic scope" value="Bacteria"/>
</dbReference>
<dbReference type="HOGENOM" id="CLU_042628_9_1_3"/>
<dbReference type="BioCyc" id="MAER449447:MAE_RS05190-MONOMER"/>
<dbReference type="Proteomes" id="UP000001510">
    <property type="component" value="Chromosome"/>
</dbReference>
<dbReference type="GO" id="GO:0031676">
    <property type="term" value="C:plasma membrane-derived thylakoid membrane"/>
    <property type="evidence" value="ECO:0007669"/>
    <property type="project" value="UniProtKB-SubCell"/>
</dbReference>
<dbReference type="GO" id="GO:0008137">
    <property type="term" value="F:NADH dehydrogenase (ubiquinone) activity"/>
    <property type="evidence" value="ECO:0007669"/>
    <property type="project" value="InterPro"/>
</dbReference>
<dbReference type="GO" id="GO:0048038">
    <property type="term" value="F:quinone binding"/>
    <property type="evidence" value="ECO:0007669"/>
    <property type="project" value="UniProtKB-KW"/>
</dbReference>
<dbReference type="GO" id="GO:0019684">
    <property type="term" value="P:photosynthesis, light reaction"/>
    <property type="evidence" value="ECO:0007669"/>
    <property type="project" value="UniProtKB-UniRule"/>
</dbReference>
<dbReference type="Gene3D" id="3.30.460.80">
    <property type="entry name" value="NADH:ubiquinone oxidoreductase, 30kDa subunit"/>
    <property type="match status" value="1"/>
</dbReference>
<dbReference type="HAMAP" id="MF_01357">
    <property type="entry name" value="NDH1_NuoC"/>
    <property type="match status" value="1"/>
</dbReference>
<dbReference type="InterPro" id="IPR010218">
    <property type="entry name" value="NADH_DH_suC"/>
</dbReference>
<dbReference type="InterPro" id="IPR037232">
    <property type="entry name" value="NADH_quin_OxRdtase_su_C/D-like"/>
</dbReference>
<dbReference type="InterPro" id="IPR001268">
    <property type="entry name" value="NADH_UbQ_OxRdtase_30kDa_su"/>
</dbReference>
<dbReference type="InterPro" id="IPR020396">
    <property type="entry name" value="NADH_UbQ_OxRdtase_CS"/>
</dbReference>
<dbReference type="NCBIfam" id="NF009141">
    <property type="entry name" value="PRK12494.1"/>
    <property type="match status" value="1"/>
</dbReference>
<dbReference type="PANTHER" id="PTHR10884:SF14">
    <property type="entry name" value="NADH DEHYDROGENASE [UBIQUINONE] IRON-SULFUR PROTEIN 3, MITOCHONDRIAL"/>
    <property type="match status" value="1"/>
</dbReference>
<dbReference type="PANTHER" id="PTHR10884">
    <property type="entry name" value="NADH DEHYDROGENASE UBIQUINONE IRON-SULFUR PROTEIN 3"/>
    <property type="match status" value="1"/>
</dbReference>
<dbReference type="Pfam" id="PF00329">
    <property type="entry name" value="Complex1_30kDa"/>
    <property type="match status" value="1"/>
</dbReference>
<dbReference type="SUPFAM" id="SSF143243">
    <property type="entry name" value="Nqo5-like"/>
    <property type="match status" value="1"/>
</dbReference>
<dbReference type="PROSITE" id="PS00542">
    <property type="entry name" value="COMPLEX1_30K"/>
    <property type="match status" value="1"/>
</dbReference>